<accession>B8DTW1</accession>
<comment type="function">
    <text evidence="1">Involved in transcription antitermination. Required for transcription of ribosomal RNA (rRNA) genes. Binds specifically to the boxA antiterminator sequence of the ribosomal RNA (rrn) operons.</text>
</comment>
<comment type="similarity">
    <text evidence="1">Belongs to the NusB family.</text>
</comment>
<protein>
    <recommendedName>
        <fullName evidence="1">Transcription antitermination protein NusB</fullName>
    </recommendedName>
    <alternativeName>
        <fullName evidence="1">Antitermination factor NusB</fullName>
    </alternativeName>
</protein>
<keyword id="KW-1185">Reference proteome</keyword>
<keyword id="KW-0694">RNA-binding</keyword>
<keyword id="KW-0804">Transcription</keyword>
<keyword id="KW-0889">Transcription antitermination</keyword>
<keyword id="KW-0805">Transcription regulation</keyword>
<name>NUSB_BIFA0</name>
<reference key="1">
    <citation type="journal article" date="2009" name="J. Bacteriol.">
        <title>Genome sequence of the probiotic bacterium Bifidobacterium animalis subsp. lactis AD011.</title>
        <authorList>
            <person name="Kim J.F."/>
            <person name="Jeong H."/>
            <person name="Yu D.S."/>
            <person name="Choi S.-H."/>
            <person name="Hur C.-G."/>
            <person name="Park M.-S."/>
            <person name="Yoon S.H."/>
            <person name="Kim D.-W."/>
            <person name="Ji G.E."/>
            <person name="Park H.-S."/>
            <person name="Oh T.K."/>
        </authorList>
    </citation>
    <scope>NUCLEOTIDE SEQUENCE [LARGE SCALE GENOMIC DNA]</scope>
    <source>
        <strain>AD011</strain>
    </source>
</reference>
<feature type="chain" id="PRO_1000192416" description="Transcription antitermination protein NusB">
    <location>
        <begin position="1"/>
        <end position="154"/>
    </location>
</feature>
<feature type="region of interest" description="Disordered" evidence="2">
    <location>
        <begin position="132"/>
        <end position="154"/>
    </location>
</feature>
<feature type="compositionally biased region" description="Acidic residues" evidence="2">
    <location>
        <begin position="143"/>
        <end position="154"/>
    </location>
</feature>
<organism>
    <name type="scientific">Bifidobacterium animalis subsp. lactis (strain AD011)</name>
    <dbReference type="NCBI Taxonomy" id="442563"/>
    <lineage>
        <taxon>Bacteria</taxon>
        <taxon>Bacillati</taxon>
        <taxon>Actinomycetota</taxon>
        <taxon>Actinomycetes</taxon>
        <taxon>Bifidobacteriales</taxon>
        <taxon>Bifidobacteriaceae</taxon>
        <taxon>Bifidobacterium</taxon>
    </lineage>
</organism>
<sequence length="154" mass="17239">MARSTARRRALNTLYEADEKGQDFLSLLDERIAQPGAQTPLPEYAIEIVRGVDEHRRDIDSQLNTHSTGWKVKRMHAIDRNILRIATWEILYNDDVPDKVAIDEALNLSKTLSDDAAPSFIHGVLSAIVAAKDKQSPQSTPLDDSDKDESDQTN</sequence>
<gene>
    <name evidence="1" type="primary">nusB</name>
    <name type="ordered locus">BLA_1152</name>
</gene>
<proteinExistence type="inferred from homology"/>
<evidence type="ECO:0000255" key="1">
    <source>
        <dbReference type="HAMAP-Rule" id="MF_00073"/>
    </source>
</evidence>
<evidence type="ECO:0000256" key="2">
    <source>
        <dbReference type="SAM" id="MobiDB-lite"/>
    </source>
</evidence>
<dbReference type="EMBL" id="CP001213">
    <property type="protein sequence ID" value="ACL29440.1"/>
    <property type="molecule type" value="Genomic_DNA"/>
</dbReference>
<dbReference type="RefSeq" id="WP_004218883.1">
    <property type="nucleotide sequence ID" value="NC_011835.1"/>
</dbReference>
<dbReference type="SMR" id="B8DTW1"/>
<dbReference type="STRING" id="442563.BLA_1152"/>
<dbReference type="GeneID" id="29696584"/>
<dbReference type="KEGG" id="bla:BLA_1152"/>
<dbReference type="HOGENOM" id="CLU_087843_2_3_11"/>
<dbReference type="Proteomes" id="UP000002456">
    <property type="component" value="Chromosome"/>
</dbReference>
<dbReference type="GO" id="GO:0005829">
    <property type="term" value="C:cytosol"/>
    <property type="evidence" value="ECO:0007669"/>
    <property type="project" value="TreeGrafter"/>
</dbReference>
<dbReference type="GO" id="GO:0003723">
    <property type="term" value="F:RNA binding"/>
    <property type="evidence" value="ECO:0007669"/>
    <property type="project" value="UniProtKB-UniRule"/>
</dbReference>
<dbReference type="GO" id="GO:0006353">
    <property type="term" value="P:DNA-templated transcription termination"/>
    <property type="evidence" value="ECO:0007669"/>
    <property type="project" value="UniProtKB-UniRule"/>
</dbReference>
<dbReference type="GO" id="GO:0031564">
    <property type="term" value="P:transcription antitermination"/>
    <property type="evidence" value="ECO:0007669"/>
    <property type="project" value="UniProtKB-KW"/>
</dbReference>
<dbReference type="Gene3D" id="1.10.940.10">
    <property type="entry name" value="NusB-like"/>
    <property type="match status" value="1"/>
</dbReference>
<dbReference type="HAMAP" id="MF_00073">
    <property type="entry name" value="NusB"/>
    <property type="match status" value="1"/>
</dbReference>
<dbReference type="InterPro" id="IPR035926">
    <property type="entry name" value="NusB-like_sf"/>
</dbReference>
<dbReference type="InterPro" id="IPR011605">
    <property type="entry name" value="NusB_fam"/>
</dbReference>
<dbReference type="InterPro" id="IPR006027">
    <property type="entry name" value="NusB_RsmB_TIM44"/>
</dbReference>
<dbReference type="NCBIfam" id="TIGR01951">
    <property type="entry name" value="nusB"/>
    <property type="match status" value="1"/>
</dbReference>
<dbReference type="PANTHER" id="PTHR11078:SF3">
    <property type="entry name" value="ANTITERMINATION NUSB DOMAIN-CONTAINING PROTEIN"/>
    <property type="match status" value="1"/>
</dbReference>
<dbReference type="PANTHER" id="PTHR11078">
    <property type="entry name" value="N UTILIZATION SUBSTANCE PROTEIN B-RELATED"/>
    <property type="match status" value="1"/>
</dbReference>
<dbReference type="Pfam" id="PF01029">
    <property type="entry name" value="NusB"/>
    <property type="match status" value="1"/>
</dbReference>
<dbReference type="SUPFAM" id="SSF48013">
    <property type="entry name" value="NusB-like"/>
    <property type="match status" value="1"/>
</dbReference>